<protein>
    <recommendedName>
        <fullName>Serine/threonine-protein kinase US3 homolog</fullName>
    </recommendedName>
    <alternativeName>
        <fullName>Protein kinase ORF66</fullName>
        <ecNumber>2.7.11.1</ecNumber>
    </alternativeName>
</protein>
<evidence type="ECO:0000250" key="1"/>
<evidence type="ECO:0000255" key="2">
    <source>
        <dbReference type="PROSITE-ProRule" id="PRU00159"/>
    </source>
</evidence>
<evidence type="ECO:0000255" key="3">
    <source>
        <dbReference type="PROSITE-ProRule" id="PRU10027"/>
    </source>
</evidence>
<evidence type="ECO:0000269" key="4">
    <source>
    </source>
</evidence>
<evidence type="ECO:0000269" key="5">
    <source>
    </source>
</evidence>
<evidence type="ECO:0000269" key="6">
    <source>
    </source>
</evidence>
<evidence type="ECO:0000269" key="7">
    <source>
    </source>
</evidence>
<reference key="1">
    <citation type="journal article" date="1986" name="J. Gen. Virol.">
        <title>The complete DNA sequence of varicella-zoster virus.</title>
        <authorList>
            <person name="Davison A.J."/>
            <person name="Scott J.E."/>
        </authorList>
    </citation>
    <scope>NUCLEOTIDE SEQUENCE [LARGE SCALE GENOMIC DNA]</scope>
</reference>
<reference key="2">
    <citation type="journal article" date="1983" name="EMBO J.">
        <title>DNA sequence of the US component of the varicella-zoster virus genome.</title>
        <authorList>
            <person name="Davison A.J."/>
        </authorList>
    </citation>
    <scope>NUCLEOTIDE SEQUENCE [GENOMIC DNA]</scope>
</reference>
<reference key="3">
    <citation type="journal article" date="1988" name="Trends Biochem. Sci.">
        <title>The herpesvirus protein kinase: a new departure in protein phosphorylation?</title>
        <authorList>
            <person name="Leader D.P."/>
            <person name="Purves F.C."/>
        </authorList>
    </citation>
    <scope>REVIEW</scope>
</reference>
<reference key="4">
    <citation type="journal article" date="2000" name="J. Virol.">
        <title>Nuclear accumulation of IE62, the varicella-zoster virus (VZV) major transcriptional regulatory protein, is inhibited by phosphorylation mediated by the VZV open reading frame 66 protein kinase.</title>
        <authorList>
            <person name="Kinchington P.R."/>
            <person name="Fite K."/>
            <person name="Turse S.E."/>
        </authorList>
    </citation>
    <scope>PHOSPHORYLATION OF IE62</scope>
</reference>
<reference key="5">
    <citation type="journal article" date="2001" name="J. Virol.">
        <title>Virion association of IE62, the varicella-zoster virus (VZV) major transcriptional regulatory protein, requires expression of the VZV open reading frame 66 protein kinase.</title>
        <authorList>
            <person name="Kinchington P.R."/>
            <person name="Fite K."/>
            <person name="Seman A."/>
            <person name="Turse S.E."/>
        </authorList>
    </citation>
    <scope>FUNCTION</scope>
</reference>
<reference key="6">
    <citation type="journal article" date="2006" name="J. Virol.">
        <title>Phosphorylation of the varicella-zoster virus (VZV) major transcriptional regulatory protein IE62 by the VZV open reading frame 66 protein kinase.</title>
        <authorList>
            <person name="Eisfeld A.J."/>
            <person name="Turse S.E."/>
            <person name="Jackson S.A."/>
            <person name="Lerner E.C."/>
            <person name="Kinchington P.R."/>
        </authorList>
    </citation>
    <scope>FUNCTION</scope>
</reference>
<reference key="7">
    <citation type="journal article" date="2007" name="J. Virol.">
        <title>Downregulation of class I major histocompatibility complex surface expression by varicella-zoster virus involves open reading frame 66 protein kinase-dependent and -independent mechanisms.</title>
        <authorList>
            <person name="Eisfeld A.J."/>
            <person name="Yee M.B."/>
            <person name="Erazo A."/>
            <person name="Abendroth A."/>
            <person name="Kinchington P.R."/>
        </authorList>
    </citation>
    <scope>FUNCTION</scope>
</reference>
<reference key="8">
    <citation type="journal article" date="2011" name="J. Virol.">
        <title>The alphaherpesvirus US3/ORF66 protein kinases direct phosphorylation of the nuclear matrix protein matrin 3.</title>
        <authorList>
            <person name="Erazo A."/>
            <person name="Yee M.B."/>
            <person name="Banfield B.W."/>
            <person name="Kinchington P.R."/>
        </authorList>
    </citation>
    <scope>FUNCTION IN PHOSPHORYLATION OF MATR3</scope>
</reference>
<gene>
    <name type="primary">66</name>
</gene>
<name>US03_VZVD</name>
<proteinExistence type="evidence at protein level"/>
<comment type="function">
    <text evidence="1 4 5 6 7">Multifunctional serine/threonine kinase that plays a role in several processes including egress of virus particles from the nucleus, modulation of the actin cytoskeleton and inhibition of apoptosis. Phosphorylates proteins 24 and 27, two critical regulators of capsid budding from nucleus to endoplasmic reticulum, thereby facilitating virion egress. Modulates and redistributes host components of the nuclear envelope, including LMNA, emerin/EMD and the nuclear matrix protein MATR3. Phosphorylates envelope glycoprotein B (gB), probably to direct it to the cell surface. Promotes virus intracellular spread by restructuring host cell cytoskeleton. Blocks host apoptosis to extend cell survival and allow efficient viral replication. Promotes viral gene expression by phosphorylating host HDAC2 to reduce viral genome silencing (By similarity). Down-regulates class I major histocompatibility complex (MHC-I) surface expression. Additionally, phosphorylates IE62 and targets it to the cytoplasm. The nuclear exclusion of IE62 enables the packaging of abundant levels of IE62 into virions.</text>
</comment>
<comment type="catalytic activity">
    <reaction>
        <text>L-seryl-[protein] + ATP = O-phospho-L-seryl-[protein] + ADP + H(+)</text>
        <dbReference type="Rhea" id="RHEA:17989"/>
        <dbReference type="Rhea" id="RHEA-COMP:9863"/>
        <dbReference type="Rhea" id="RHEA-COMP:11604"/>
        <dbReference type="ChEBI" id="CHEBI:15378"/>
        <dbReference type="ChEBI" id="CHEBI:29999"/>
        <dbReference type="ChEBI" id="CHEBI:30616"/>
        <dbReference type="ChEBI" id="CHEBI:83421"/>
        <dbReference type="ChEBI" id="CHEBI:456216"/>
        <dbReference type="EC" id="2.7.11.1"/>
    </reaction>
</comment>
<comment type="catalytic activity">
    <reaction>
        <text>L-threonyl-[protein] + ATP = O-phospho-L-threonyl-[protein] + ADP + H(+)</text>
        <dbReference type="Rhea" id="RHEA:46608"/>
        <dbReference type="Rhea" id="RHEA-COMP:11060"/>
        <dbReference type="Rhea" id="RHEA-COMP:11605"/>
        <dbReference type="ChEBI" id="CHEBI:15378"/>
        <dbReference type="ChEBI" id="CHEBI:30013"/>
        <dbReference type="ChEBI" id="CHEBI:30616"/>
        <dbReference type="ChEBI" id="CHEBI:61977"/>
        <dbReference type="ChEBI" id="CHEBI:456216"/>
        <dbReference type="EC" id="2.7.11.1"/>
    </reaction>
</comment>
<comment type="subcellular location">
    <subcellularLocation>
        <location evidence="1">Host cytoplasm</location>
    </subcellularLocation>
    <subcellularLocation>
        <location evidence="1">Host nucleus</location>
    </subcellularLocation>
</comment>
<comment type="PTM">
    <text evidence="1">Phosphorylated by ORF47; this phosphorylation regulates subsequent phosphorylation of proteins 24 and 27 by ORF66. Autophosphorylated (By similarity).</text>
</comment>
<comment type="similarity">
    <text evidence="2">Belongs to the protein kinase superfamily. Ser/Thr protein kinase family.</text>
</comment>
<organism>
    <name type="scientific">Varicella-zoster virus (strain Dumas)</name>
    <name type="common">HHV-3</name>
    <name type="synonym">Human herpesvirus 3</name>
    <dbReference type="NCBI Taxonomy" id="10338"/>
    <lineage>
        <taxon>Viruses</taxon>
        <taxon>Duplodnaviria</taxon>
        <taxon>Heunggongvirae</taxon>
        <taxon>Peploviricota</taxon>
        <taxon>Herviviricetes</taxon>
        <taxon>Herpesvirales</taxon>
        <taxon>Orthoherpesviridae</taxon>
        <taxon>Alphaherpesvirinae</taxon>
        <taxon>Varicellovirus</taxon>
        <taxon>Varicellovirus humanalpha3</taxon>
        <taxon>Human herpesvirus 3</taxon>
    </lineage>
</organism>
<keyword id="KW-0067">ATP-binding</keyword>
<keyword id="KW-1035">Host cytoplasm</keyword>
<keyword id="KW-1048">Host nucleus</keyword>
<keyword id="KW-0945">Host-virus interaction</keyword>
<keyword id="KW-1080">Inhibition of host adaptive immune response by virus</keyword>
<keyword id="KW-1115">Inhibition of host MHC class I molecule presentation by virus</keyword>
<keyword id="KW-0418">Kinase</keyword>
<keyword id="KW-1119">Modulation of host cell apoptosis by virus</keyword>
<keyword id="KW-1122">Modulation of host chromatin by virus</keyword>
<keyword id="KW-0547">Nucleotide-binding</keyword>
<keyword id="KW-1185">Reference proteome</keyword>
<keyword id="KW-0723">Serine/threonine-protein kinase</keyword>
<keyword id="KW-0808">Transferase</keyword>
<keyword id="KW-0899">Viral immunoevasion</keyword>
<feature type="chain" id="PRO_0000086183" description="Serine/threonine-protein kinase US3 homolog">
    <location>
        <begin position="1"/>
        <end position="393"/>
    </location>
</feature>
<feature type="domain" description="Protein kinase" evidence="2">
    <location>
        <begin position="93"/>
        <end position="378"/>
    </location>
</feature>
<feature type="active site" description="Proton acceptor" evidence="2 3">
    <location>
        <position position="206"/>
    </location>
</feature>
<feature type="binding site" evidence="2">
    <location>
        <begin position="99"/>
        <end position="107"/>
    </location>
    <ligand>
        <name>ATP</name>
        <dbReference type="ChEBI" id="CHEBI:30616"/>
    </ligand>
</feature>
<feature type="binding site" evidence="2">
    <location>
        <position position="122"/>
    </location>
    <ligand>
        <name>ATP</name>
        <dbReference type="ChEBI" id="CHEBI:30616"/>
    </ligand>
</feature>
<sequence length="393" mass="43680">MNDVDATDTFVGQGKFRGAISTSPSHIMQTCGFIQQMFPVEMSPGIESEDDPNYDVNMDIQSFNIFDGVHETEAEASVALCAEARVGINKAGFVILKTFTPGAEGFAFACMDSKTCEHVVIKAGQRQGTATEATVLRALTHPSVVQLKGTFTYNKMTCLILPRYRTDLYCYLAAKRNLPICDILAIQRSVLRALQYLHNNSIIHRDIKSENIFINHPGDVCVGDFGAACFPVDINANRYYGWAGTIATNSPELLARDPYGPAVDIWSAGIVLFEMATGQNSLFERDGLDGNCDSERQIKLIIRRSGTHPNEFPINPTSNLRRQYIGLAKRSSRKPGSRPLWTNLYELPIDLEYLICKMLSFDARHRPSAEVLLNHSVFQTLPDPYPNPMEVGD</sequence>
<dbReference type="EC" id="2.7.11.1"/>
<dbReference type="EMBL" id="X04370">
    <property type="protein sequence ID" value="CAA27949.1"/>
    <property type="molecule type" value="Genomic_DNA"/>
</dbReference>
<dbReference type="EMBL" id="X00208">
    <property type="protein sequence ID" value="CAA25031.1"/>
    <property type="molecule type" value="Genomic_DNA"/>
</dbReference>
<dbReference type="PIR" id="E27345">
    <property type="entry name" value="TVBE66"/>
</dbReference>
<dbReference type="SMR" id="P09251"/>
<dbReference type="KEGG" id="vg:1487703"/>
<dbReference type="Proteomes" id="UP000002602">
    <property type="component" value="Genome"/>
</dbReference>
<dbReference type="GO" id="GO:0030430">
    <property type="term" value="C:host cell cytoplasm"/>
    <property type="evidence" value="ECO:0007669"/>
    <property type="project" value="UniProtKB-SubCell"/>
</dbReference>
<dbReference type="GO" id="GO:0042025">
    <property type="term" value="C:host cell nucleus"/>
    <property type="evidence" value="ECO:0007669"/>
    <property type="project" value="UniProtKB-SubCell"/>
</dbReference>
<dbReference type="GO" id="GO:0005524">
    <property type="term" value="F:ATP binding"/>
    <property type="evidence" value="ECO:0007669"/>
    <property type="project" value="UniProtKB-KW"/>
</dbReference>
<dbReference type="GO" id="GO:0106310">
    <property type="term" value="F:protein serine kinase activity"/>
    <property type="evidence" value="ECO:0007669"/>
    <property type="project" value="RHEA"/>
</dbReference>
<dbReference type="GO" id="GO:0004674">
    <property type="term" value="F:protein serine/threonine kinase activity"/>
    <property type="evidence" value="ECO:0007669"/>
    <property type="project" value="UniProtKB-KW"/>
</dbReference>
<dbReference type="GO" id="GO:0052150">
    <property type="term" value="P:symbiont-mediated perturbation of host apoptosis"/>
    <property type="evidence" value="ECO:0007669"/>
    <property type="project" value="UniProtKB-KW"/>
</dbReference>
<dbReference type="GO" id="GO:0039525">
    <property type="term" value="P:symbiont-mediated perturbation of host chromatin organization"/>
    <property type="evidence" value="ECO:0007669"/>
    <property type="project" value="UniProtKB-KW"/>
</dbReference>
<dbReference type="GO" id="GO:0046776">
    <property type="term" value="P:symbiont-mediated suppression of host antigen processing and presentation of peptide antigen via MHC class I"/>
    <property type="evidence" value="ECO:0007669"/>
    <property type="project" value="UniProtKB-KW"/>
</dbReference>
<dbReference type="CDD" id="cd00180">
    <property type="entry name" value="PKc"/>
    <property type="match status" value="1"/>
</dbReference>
<dbReference type="Gene3D" id="3.30.200.20">
    <property type="entry name" value="Phosphorylase Kinase, domain 1"/>
    <property type="match status" value="1"/>
</dbReference>
<dbReference type="Gene3D" id="1.10.510.10">
    <property type="entry name" value="Transferase(Phosphotransferase) domain 1"/>
    <property type="match status" value="1"/>
</dbReference>
<dbReference type="InterPro" id="IPR011009">
    <property type="entry name" value="Kinase-like_dom_sf"/>
</dbReference>
<dbReference type="InterPro" id="IPR050660">
    <property type="entry name" value="NEK_Ser/Thr_kinase"/>
</dbReference>
<dbReference type="InterPro" id="IPR000719">
    <property type="entry name" value="Prot_kinase_dom"/>
</dbReference>
<dbReference type="InterPro" id="IPR008271">
    <property type="entry name" value="Ser/Thr_kinase_AS"/>
</dbReference>
<dbReference type="PANTHER" id="PTHR43671:SF103">
    <property type="entry name" value="KINASE, PUTATIVE-RELATED"/>
    <property type="match status" value="1"/>
</dbReference>
<dbReference type="PANTHER" id="PTHR43671">
    <property type="entry name" value="SERINE/THREONINE-PROTEIN KINASE NEK"/>
    <property type="match status" value="1"/>
</dbReference>
<dbReference type="Pfam" id="PF00069">
    <property type="entry name" value="Pkinase"/>
    <property type="match status" value="1"/>
</dbReference>
<dbReference type="SMART" id="SM00220">
    <property type="entry name" value="S_TKc"/>
    <property type="match status" value="1"/>
</dbReference>
<dbReference type="SUPFAM" id="SSF56112">
    <property type="entry name" value="Protein kinase-like (PK-like)"/>
    <property type="match status" value="1"/>
</dbReference>
<dbReference type="PROSITE" id="PS50011">
    <property type="entry name" value="PROTEIN_KINASE_DOM"/>
    <property type="match status" value="1"/>
</dbReference>
<dbReference type="PROSITE" id="PS00108">
    <property type="entry name" value="PROTEIN_KINASE_ST"/>
    <property type="match status" value="1"/>
</dbReference>
<organismHost>
    <name type="scientific">Homo sapiens</name>
    <name type="common">Human</name>
    <dbReference type="NCBI Taxonomy" id="9606"/>
</organismHost>
<accession>P09251</accession>